<accession>Q1R017</accession>
<reference key="1">
    <citation type="journal article" date="2011" name="Stand. Genomic Sci.">
        <title>Complete genome sequence of the halophilic and highly halotolerant Chromohalobacter salexigens type strain (1H11(T)).</title>
        <authorList>
            <person name="Copeland A."/>
            <person name="O'Connor K."/>
            <person name="Lucas S."/>
            <person name="Lapidus A."/>
            <person name="Berry K.W."/>
            <person name="Detter J.C."/>
            <person name="Del Rio T.G."/>
            <person name="Hammon N."/>
            <person name="Dalin E."/>
            <person name="Tice H."/>
            <person name="Pitluck S."/>
            <person name="Bruce D."/>
            <person name="Goodwin L."/>
            <person name="Han C."/>
            <person name="Tapia R."/>
            <person name="Saunders E."/>
            <person name="Schmutz J."/>
            <person name="Brettin T."/>
            <person name="Larimer F."/>
            <person name="Land M."/>
            <person name="Hauser L."/>
            <person name="Vargas C."/>
            <person name="Nieto J.J."/>
            <person name="Kyrpides N.C."/>
            <person name="Ivanova N."/>
            <person name="Goker M."/>
            <person name="Klenk H.P."/>
            <person name="Csonka L.N."/>
            <person name="Woyke T."/>
        </authorList>
    </citation>
    <scope>NUCLEOTIDE SEQUENCE [LARGE SCALE GENOMIC DNA]</scope>
    <source>
        <strain>ATCC BAA-138 / DSM 3043 / CIP 106854 / NCIMB 13768 / 1H11</strain>
    </source>
</reference>
<comment type="function">
    <text evidence="1">Component of the acetyl coenzyme A carboxylase (ACC) complex. First, biotin carboxylase catalyzes the carboxylation of biotin on its carrier protein (BCCP) and then the CO(2) group is transferred by the carboxyltransferase to acetyl-CoA to form malonyl-CoA.</text>
</comment>
<comment type="catalytic activity">
    <reaction evidence="1">
        <text>N(6)-carboxybiotinyl-L-lysyl-[protein] + acetyl-CoA = N(6)-biotinyl-L-lysyl-[protein] + malonyl-CoA</text>
        <dbReference type="Rhea" id="RHEA:54728"/>
        <dbReference type="Rhea" id="RHEA-COMP:10505"/>
        <dbReference type="Rhea" id="RHEA-COMP:10506"/>
        <dbReference type="ChEBI" id="CHEBI:57288"/>
        <dbReference type="ChEBI" id="CHEBI:57384"/>
        <dbReference type="ChEBI" id="CHEBI:83144"/>
        <dbReference type="ChEBI" id="CHEBI:83145"/>
        <dbReference type="EC" id="2.1.3.15"/>
    </reaction>
</comment>
<comment type="pathway">
    <text evidence="1">Lipid metabolism; malonyl-CoA biosynthesis; malonyl-CoA from acetyl-CoA: step 1/1.</text>
</comment>
<comment type="subunit">
    <text evidence="1">Acetyl-CoA carboxylase is a heterohexamer composed of biotin carboxyl carrier protein (AccB), biotin carboxylase (AccC) and two subunits each of ACCase subunit alpha (AccA) and ACCase subunit beta (AccD).</text>
</comment>
<comment type="subcellular location">
    <subcellularLocation>
        <location evidence="1">Cytoplasm</location>
    </subcellularLocation>
</comment>
<comment type="similarity">
    <text evidence="1">Belongs to the AccA family.</text>
</comment>
<sequence length="317" mass="35219">MNPNYLDFEQPIAELEAKIEELRLVGNDSGISLSDEIGKLEDKNRKLTESIFRDLSAWQVSQLSRHPQRPYMLDYVESLFSDFDELHGDRNFADDAAIVGGVARLDDKPVMLIGHQKGRDVKEKVRRNFGMPRPEGYRKACRLMEMAERFKMPVLTFIDTPGAYPGIDAEERGQSEAIAYNLAVMSRLRTPIVATVVGEGGSGGALAIGVCDELQMLQYSTYSVISPEGCASILWKSAEKASEAAQAMGITAERLKELGFVDTLIKEPLGGAHRNPQKMAGHIKDALGASLERLESMEMDDLLSRRYERLMSYGAPQ</sequence>
<gene>
    <name evidence="1" type="primary">accA</name>
    <name type="ordered locus">Csal_0579</name>
</gene>
<dbReference type="EC" id="2.1.3.15" evidence="1"/>
<dbReference type="EMBL" id="CP000285">
    <property type="protein sequence ID" value="ABE57941.1"/>
    <property type="molecule type" value="Genomic_DNA"/>
</dbReference>
<dbReference type="RefSeq" id="WP_011505887.1">
    <property type="nucleotide sequence ID" value="NC_007963.1"/>
</dbReference>
<dbReference type="SMR" id="Q1R017"/>
<dbReference type="STRING" id="290398.Csal_0579"/>
<dbReference type="GeneID" id="95333335"/>
<dbReference type="KEGG" id="csa:Csal_0579"/>
<dbReference type="eggNOG" id="COG0825">
    <property type="taxonomic scope" value="Bacteria"/>
</dbReference>
<dbReference type="HOGENOM" id="CLU_015486_0_2_6"/>
<dbReference type="OrthoDB" id="9808023at2"/>
<dbReference type="UniPathway" id="UPA00655">
    <property type="reaction ID" value="UER00711"/>
</dbReference>
<dbReference type="Proteomes" id="UP000000239">
    <property type="component" value="Chromosome"/>
</dbReference>
<dbReference type="GO" id="GO:0009317">
    <property type="term" value="C:acetyl-CoA carboxylase complex"/>
    <property type="evidence" value="ECO:0007669"/>
    <property type="project" value="InterPro"/>
</dbReference>
<dbReference type="GO" id="GO:0003989">
    <property type="term" value="F:acetyl-CoA carboxylase activity"/>
    <property type="evidence" value="ECO:0007669"/>
    <property type="project" value="InterPro"/>
</dbReference>
<dbReference type="GO" id="GO:0005524">
    <property type="term" value="F:ATP binding"/>
    <property type="evidence" value="ECO:0007669"/>
    <property type="project" value="UniProtKB-KW"/>
</dbReference>
<dbReference type="GO" id="GO:0016743">
    <property type="term" value="F:carboxyl- or carbamoyltransferase activity"/>
    <property type="evidence" value="ECO:0007669"/>
    <property type="project" value="UniProtKB-UniRule"/>
</dbReference>
<dbReference type="GO" id="GO:0006633">
    <property type="term" value="P:fatty acid biosynthetic process"/>
    <property type="evidence" value="ECO:0007669"/>
    <property type="project" value="UniProtKB-KW"/>
</dbReference>
<dbReference type="GO" id="GO:2001295">
    <property type="term" value="P:malonyl-CoA biosynthetic process"/>
    <property type="evidence" value="ECO:0007669"/>
    <property type="project" value="UniProtKB-UniRule"/>
</dbReference>
<dbReference type="FunFam" id="3.90.226.10:FF:000008">
    <property type="entry name" value="Acetyl-coenzyme A carboxylase carboxyl transferase subunit alpha"/>
    <property type="match status" value="1"/>
</dbReference>
<dbReference type="Gene3D" id="3.90.226.10">
    <property type="entry name" value="2-enoyl-CoA Hydratase, Chain A, domain 1"/>
    <property type="match status" value="1"/>
</dbReference>
<dbReference type="HAMAP" id="MF_00823">
    <property type="entry name" value="AcetylCoA_CT_alpha"/>
    <property type="match status" value="1"/>
</dbReference>
<dbReference type="InterPro" id="IPR001095">
    <property type="entry name" value="Acetyl_CoA_COase_a_su"/>
</dbReference>
<dbReference type="InterPro" id="IPR029045">
    <property type="entry name" value="ClpP/crotonase-like_dom_sf"/>
</dbReference>
<dbReference type="InterPro" id="IPR011763">
    <property type="entry name" value="COA_CT_C"/>
</dbReference>
<dbReference type="NCBIfam" id="TIGR00513">
    <property type="entry name" value="accA"/>
    <property type="match status" value="1"/>
</dbReference>
<dbReference type="NCBIfam" id="NF041504">
    <property type="entry name" value="AccA_sub"/>
    <property type="match status" value="1"/>
</dbReference>
<dbReference type="NCBIfam" id="NF004344">
    <property type="entry name" value="PRK05724.1"/>
    <property type="match status" value="1"/>
</dbReference>
<dbReference type="PANTHER" id="PTHR42853">
    <property type="entry name" value="ACETYL-COENZYME A CARBOXYLASE CARBOXYL TRANSFERASE SUBUNIT ALPHA"/>
    <property type="match status" value="1"/>
</dbReference>
<dbReference type="PANTHER" id="PTHR42853:SF3">
    <property type="entry name" value="ACETYL-COENZYME A CARBOXYLASE CARBOXYL TRANSFERASE SUBUNIT ALPHA, CHLOROPLASTIC"/>
    <property type="match status" value="1"/>
</dbReference>
<dbReference type="Pfam" id="PF03255">
    <property type="entry name" value="ACCA"/>
    <property type="match status" value="1"/>
</dbReference>
<dbReference type="PRINTS" id="PR01069">
    <property type="entry name" value="ACCCTRFRASEA"/>
</dbReference>
<dbReference type="SUPFAM" id="SSF52096">
    <property type="entry name" value="ClpP/crotonase"/>
    <property type="match status" value="1"/>
</dbReference>
<dbReference type="PROSITE" id="PS50989">
    <property type="entry name" value="COA_CT_CTER"/>
    <property type="match status" value="1"/>
</dbReference>
<organism>
    <name type="scientific">Chromohalobacter salexigens (strain ATCC BAA-138 / DSM 3043 / CIP 106854 / NCIMB 13768 / 1H11)</name>
    <dbReference type="NCBI Taxonomy" id="290398"/>
    <lineage>
        <taxon>Bacteria</taxon>
        <taxon>Pseudomonadati</taxon>
        <taxon>Pseudomonadota</taxon>
        <taxon>Gammaproteobacteria</taxon>
        <taxon>Oceanospirillales</taxon>
        <taxon>Halomonadaceae</taxon>
        <taxon>Chromohalobacter</taxon>
    </lineage>
</organism>
<keyword id="KW-0067">ATP-binding</keyword>
<keyword id="KW-0963">Cytoplasm</keyword>
<keyword id="KW-0275">Fatty acid biosynthesis</keyword>
<keyword id="KW-0276">Fatty acid metabolism</keyword>
<keyword id="KW-0444">Lipid biosynthesis</keyword>
<keyword id="KW-0443">Lipid metabolism</keyword>
<keyword id="KW-0547">Nucleotide-binding</keyword>
<keyword id="KW-1185">Reference proteome</keyword>
<keyword id="KW-0808">Transferase</keyword>
<proteinExistence type="inferred from homology"/>
<feature type="chain" id="PRO_1000062606" description="Acetyl-coenzyme A carboxylase carboxyl transferase subunit alpha">
    <location>
        <begin position="1"/>
        <end position="317"/>
    </location>
</feature>
<feature type="domain" description="CoA carboxyltransferase C-terminal" evidence="2">
    <location>
        <begin position="39"/>
        <end position="293"/>
    </location>
</feature>
<name>ACCA_CHRSD</name>
<protein>
    <recommendedName>
        <fullName evidence="1">Acetyl-coenzyme A carboxylase carboxyl transferase subunit alpha</fullName>
        <shortName evidence="1">ACCase subunit alpha</shortName>
        <shortName evidence="1">Acetyl-CoA carboxylase carboxyltransferase subunit alpha</shortName>
        <ecNumber evidence="1">2.1.3.15</ecNumber>
    </recommendedName>
</protein>
<evidence type="ECO:0000255" key="1">
    <source>
        <dbReference type="HAMAP-Rule" id="MF_00823"/>
    </source>
</evidence>
<evidence type="ECO:0000255" key="2">
    <source>
        <dbReference type="PROSITE-ProRule" id="PRU01137"/>
    </source>
</evidence>